<reference key="1">
    <citation type="journal article" date="2008" name="Genome Res.">
        <title>Insights from the complete genome sequence of Mycobacterium marinum on the evolution of Mycobacterium tuberculosis.</title>
        <authorList>
            <person name="Stinear T.P."/>
            <person name="Seemann T."/>
            <person name="Harrison P.F."/>
            <person name="Jenkin G.A."/>
            <person name="Davies J.K."/>
            <person name="Johnson P.D."/>
            <person name="Abdellah Z."/>
            <person name="Arrowsmith C."/>
            <person name="Chillingworth T."/>
            <person name="Churcher C."/>
            <person name="Clarke K."/>
            <person name="Cronin A."/>
            <person name="Davis P."/>
            <person name="Goodhead I."/>
            <person name="Holroyd N."/>
            <person name="Jagels K."/>
            <person name="Lord A."/>
            <person name="Moule S."/>
            <person name="Mungall K."/>
            <person name="Norbertczak H."/>
            <person name="Quail M.A."/>
            <person name="Rabbinowitsch E."/>
            <person name="Walker D."/>
            <person name="White B."/>
            <person name="Whitehead S."/>
            <person name="Small P.L."/>
            <person name="Brosch R."/>
            <person name="Ramakrishnan L."/>
            <person name="Fischbach M.A."/>
            <person name="Parkhill J."/>
            <person name="Cole S.T."/>
        </authorList>
    </citation>
    <scope>NUCLEOTIDE SEQUENCE [LARGE SCALE GENOMIC DNA]</scope>
    <source>
        <strain>ATCC BAA-535 / M</strain>
    </source>
</reference>
<name>TIG_MYCMM</name>
<protein>
    <recommendedName>
        <fullName evidence="1">Trigger factor</fullName>
        <shortName evidence="1">TF</shortName>
        <ecNumber evidence="1">5.2.1.8</ecNumber>
    </recommendedName>
    <alternativeName>
        <fullName evidence="1">PPIase</fullName>
    </alternativeName>
</protein>
<accession>B2HNG6</accession>
<sequence length="484" mass="52364">MKSSVEQLSPTRVRIKVEVPFAELEPDFQRAYKELAKQVRLPGFRPGRAPVKLLEARFGREAMLDQIVNDAVPSRYGQALAESEIQPLGRPDIEVTQKEYGQDLAFTAEVDVRPEIALPDLTGLSVSVDAIEATDDEVNAELESLRARFGTLTEVERPVATGDFISIDLSAAVDGEDVPNAAAEGLSHEVGSGRLIAGLDDAVVGLSVDESRVFTAKLAAGDHAGRDAEVTVTVKSVKERELPEPDDEFAQLASEFDTIDELRASLREQVLQAKRVGQAEQIRNATIDALLERVDVPTPESYVQAQYEGVLHSALSGINNDEARFNELLVEQGSSRDAFDAEARTASEKDVKRQLLLDALADDLKVQVGQEDLTERLVLTSRQYGIEPQQLFAYLQENNQLPSMFADVRRELAVKAVAQAATVTDTDGNTIDTSEFFGKPPENDVTDLLDDDADGDAGVDADGDTENSAEPADADSADAAQGAG</sequence>
<comment type="function">
    <text evidence="1">Involved in protein export. Acts as a chaperone by maintaining the newly synthesized protein in an open conformation. Functions as a peptidyl-prolyl cis-trans isomerase.</text>
</comment>
<comment type="catalytic activity">
    <reaction evidence="1">
        <text>[protein]-peptidylproline (omega=180) = [protein]-peptidylproline (omega=0)</text>
        <dbReference type="Rhea" id="RHEA:16237"/>
        <dbReference type="Rhea" id="RHEA-COMP:10747"/>
        <dbReference type="Rhea" id="RHEA-COMP:10748"/>
        <dbReference type="ChEBI" id="CHEBI:83833"/>
        <dbReference type="ChEBI" id="CHEBI:83834"/>
        <dbReference type="EC" id="5.2.1.8"/>
    </reaction>
</comment>
<comment type="subcellular location">
    <subcellularLocation>
        <location>Cytoplasm</location>
    </subcellularLocation>
    <text evidence="1">About half TF is bound to the ribosome near the polypeptide exit tunnel while the other half is free in the cytoplasm.</text>
</comment>
<comment type="domain">
    <text evidence="1">Consists of 3 domains; the N-terminus binds the ribosome, the middle domain has PPIase activity, while the C-terminus has intrinsic chaperone activity on its own.</text>
</comment>
<comment type="similarity">
    <text evidence="1">Belongs to the FKBP-type PPIase family. Tig subfamily.</text>
</comment>
<evidence type="ECO:0000255" key="1">
    <source>
        <dbReference type="HAMAP-Rule" id="MF_00303"/>
    </source>
</evidence>
<evidence type="ECO:0000256" key="2">
    <source>
        <dbReference type="SAM" id="MobiDB-lite"/>
    </source>
</evidence>
<gene>
    <name evidence="1" type="primary">tig</name>
    <name type="ordered locus">MMAR_3809</name>
</gene>
<organism>
    <name type="scientific">Mycobacterium marinum (strain ATCC BAA-535 / M)</name>
    <dbReference type="NCBI Taxonomy" id="216594"/>
    <lineage>
        <taxon>Bacteria</taxon>
        <taxon>Bacillati</taxon>
        <taxon>Actinomycetota</taxon>
        <taxon>Actinomycetes</taxon>
        <taxon>Mycobacteriales</taxon>
        <taxon>Mycobacteriaceae</taxon>
        <taxon>Mycobacterium</taxon>
        <taxon>Mycobacterium ulcerans group</taxon>
    </lineage>
</organism>
<keyword id="KW-0131">Cell cycle</keyword>
<keyword id="KW-0132">Cell division</keyword>
<keyword id="KW-0143">Chaperone</keyword>
<keyword id="KW-0963">Cytoplasm</keyword>
<keyword id="KW-0413">Isomerase</keyword>
<keyword id="KW-1185">Reference proteome</keyword>
<keyword id="KW-0697">Rotamase</keyword>
<feature type="chain" id="PRO_1000115557" description="Trigger factor">
    <location>
        <begin position="1"/>
        <end position="484"/>
    </location>
</feature>
<feature type="domain" description="PPIase FKBP-type" evidence="1">
    <location>
        <begin position="162"/>
        <end position="243"/>
    </location>
</feature>
<feature type="region of interest" description="Disordered" evidence="2">
    <location>
        <begin position="427"/>
        <end position="484"/>
    </location>
</feature>
<feature type="compositionally biased region" description="Acidic residues" evidence="2">
    <location>
        <begin position="444"/>
        <end position="476"/>
    </location>
</feature>
<dbReference type="EC" id="5.2.1.8" evidence="1"/>
<dbReference type="EMBL" id="CP000854">
    <property type="protein sequence ID" value="ACC42219.1"/>
    <property type="molecule type" value="Genomic_DNA"/>
</dbReference>
<dbReference type="RefSeq" id="WP_012395409.1">
    <property type="nucleotide sequence ID" value="NC_010612.1"/>
</dbReference>
<dbReference type="SMR" id="B2HNG6"/>
<dbReference type="STRING" id="216594.MMAR_3809"/>
<dbReference type="KEGG" id="mmi:MMAR_3809"/>
<dbReference type="eggNOG" id="COG0544">
    <property type="taxonomic scope" value="Bacteria"/>
</dbReference>
<dbReference type="HOGENOM" id="CLU_033058_3_0_11"/>
<dbReference type="OrthoDB" id="9767721at2"/>
<dbReference type="Proteomes" id="UP000001190">
    <property type="component" value="Chromosome"/>
</dbReference>
<dbReference type="GO" id="GO:0005737">
    <property type="term" value="C:cytoplasm"/>
    <property type="evidence" value="ECO:0007669"/>
    <property type="project" value="UniProtKB-SubCell"/>
</dbReference>
<dbReference type="GO" id="GO:0003755">
    <property type="term" value="F:peptidyl-prolyl cis-trans isomerase activity"/>
    <property type="evidence" value="ECO:0007669"/>
    <property type="project" value="UniProtKB-UniRule"/>
</dbReference>
<dbReference type="GO" id="GO:0044183">
    <property type="term" value="F:protein folding chaperone"/>
    <property type="evidence" value="ECO:0007669"/>
    <property type="project" value="TreeGrafter"/>
</dbReference>
<dbReference type="GO" id="GO:0043022">
    <property type="term" value="F:ribosome binding"/>
    <property type="evidence" value="ECO:0007669"/>
    <property type="project" value="TreeGrafter"/>
</dbReference>
<dbReference type="GO" id="GO:0051083">
    <property type="term" value="P:'de novo' cotranslational protein folding"/>
    <property type="evidence" value="ECO:0007669"/>
    <property type="project" value="TreeGrafter"/>
</dbReference>
<dbReference type="GO" id="GO:0051301">
    <property type="term" value="P:cell division"/>
    <property type="evidence" value="ECO:0007669"/>
    <property type="project" value="UniProtKB-KW"/>
</dbReference>
<dbReference type="GO" id="GO:0061077">
    <property type="term" value="P:chaperone-mediated protein folding"/>
    <property type="evidence" value="ECO:0007669"/>
    <property type="project" value="TreeGrafter"/>
</dbReference>
<dbReference type="GO" id="GO:0015031">
    <property type="term" value="P:protein transport"/>
    <property type="evidence" value="ECO:0007669"/>
    <property type="project" value="UniProtKB-UniRule"/>
</dbReference>
<dbReference type="GO" id="GO:0043335">
    <property type="term" value="P:protein unfolding"/>
    <property type="evidence" value="ECO:0007669"/>
    <property type="project" value="TreeGrafter"/>
</dbReference>
<dbReference type="FunFam" id="3.10.50.40:FF:000019">
    <property type="entry name" value="Trigger factor"/>
    <property type="match status" value="1"/>
</dbReference>
<dbReference type="Gene3D" id="3.10.50.40">
    <property type="match status" value="1"/>
</dbReference>
<dbReference type="Gene3D" id="3.30.70.1050">
    <property type="entry name" value="Trigger factor ribosome-binding domain"/>
    <property type="match status" value="1"/>
</dbReference>
<dbReference type="Gene3D" id="1.10.3120.10">
    <property type="entry name" value="Trigger factor, C-terminal domain"/>
    <property type="match status" value="1"/>
</dbReference>
<dbReference type="HAMAP" id="MF_00303">
    <property type="entry name" value="Trigger_factor_Tig"/>
    <property type="match status" value="1"/>
</dbReference>
<dbReference type="InterPro" id="IPR046357">
    <property type="entry name" value="PPIase_dom_sf"/>
</dbReference>
<dbReference type="InterPro" id="IPR001179">
    <property type="entry name" value="PPIase_FKBP_dom"/>
</dbReference>
<dbReference type="InterPro" id="IPR005215">
    <property type="entry name" value="Trig_fac"/>
</dbReference>
<dbReference type="InterPro" id="IPR008880">
    <property type="entry name" value="Trigger_fac_C"/>
</dbReference>
<dbReference type="InterPro" id="IPR037041">
    <property type="entry name" value="Trigger_fac_C_sf"/>
</dbReference>
<dbReference type="InterPro" id="IPR008881">
    <property type="entry name" value="Trigger_fac_ribosome-bd_bac"/>
</dbReference>
<dbReference type="InterPro" id="IPR036611">
    <property type="entry name" value="Trigger_fac_ribosome-bd_sf"/>
</dbReference>
<dbReference type="InterPro" id="IPR027304">
    <property type="entry name" value="Trigger_fact/SurA_dom_sf"/>
</dbReference>
<dbReference type="NCBIfam" id="TIGR00115">
    <property type="entry name" value="tig"/>
    <property type="match status" value="1"/>
</dbReference>
<dbReference type="PANTHER" id="PTHR30560">
    <property type="entry name" value="TRIGGER FACTOR CHAPERONE AND PEPTIDYL-PROLYL CIS/TRANS ISOMERASE"/>
    <property type="match status" value="1"/>
</dbReference>
<dbReference type="PANTHER" id="PTHR30560:SF3">
    <property type="entry name" value="TRIGGER FACTOR-LIKE PROTEIN TIG, CHLOROPLASTIC"/>
    <property type="match status" value="1"/>
</dbReference>
<dbReference type="Pfam" id="PF00254">
    <property type="entry name" value="FKBP_C"/>
    <property type="match status" value="1"/>
</dbReference>
<dbReference type="Pfam" id="PF05698">
    <property type="entry name" value="Trigger_C"/>
    <property type="match status" value="1"/>
</dbReference>
<dbReference type="Pfam" id="PF05697">
    <property type="entry name" value="Trigger_N"/>
    <property type="match status" value="1"/>
</dbReference>
<dbReference type="PIRSF" id="PIRSF003095">
    <property type="entry name" value="Trigger_factor"/>
    <property type="match status" value="1"/>
</dbReference>
<dbReference type="SUPFAM" id="SSF54534">
    <property type="entry name" value="FKBP-like"/>
    <property type="match status" value="1"/>
</dbReference>
<dbReference type="SUPFAM" id="SSF109998">
    <property type="entry name" value="Triger factor/SurA peptide-binding domain-like"/>
    <property type="match status" value="1"/>
</dbReference>
<dbReference type="SUPFAM" id="SSF102735">
    <property type="entry name" value="Trigger factor ribosome-binding domain"/>
    <property type="match status" value="1"/>
</dbReference>
<proteinExistence type="inferred from homology"/>